<comment type="function">
    <text evidence="1">Catalyzes the reversible cleavage of L-rhamnulose-1-phosphate to dihydroxyacetone phosphate (DHAP) and L-lactaldehyde.</text>
</comment>
<comment type="catalytic activity">
    <reaction evidence="1">
        <text>L-rhamnulose 1-phosphate = (S)-lactaldehyde + dihydroxyacetone phosphate</text>
        <dbReference type="Rhea" id="RHEA:19689"/>
        <dbReference type="ChEBI" id="CHEBI:18041"/>
        <dbReference type="ChEBI" id="CHEBI:57642"/>
        <dbReference type="ChEBI" id="CHEBI:58313"/>
        <dbReference type="EC" id="4.1.2.19"/>
    </reaction>
</comment>
<comment type="cofactor">
    <cofactor evidence="1">
        <name>Zn(2+)</name>
        <dbReference type="ChEBI" id="CHEBI:29105"/>
    </cofactor>
    <text evidence="1">Binds 1 zinc ion per subunit.</text>
</comment>
<comment type="pathway">
    <text evidence="1">Carbohydrate degradation; L-rhamnose degradation; glycerone phosphate from L-rhamnose: step 3/3.</text>
</comment>
<comment type="subunit">
    <text evidence="1">Homotetramer.</text>
</comment>
<comment type="subcellular location">
    <subcellularLocation>
        <location evidence="1">Cytoplasm</location>
    </subcellularLocation>
</comment>
<comment type="similarity">
    <text evidence="1">Belongs to the aldolase class II family. RhaD subfamily.</text>
</comment>
<protein>
    <recommendedName>
        <fullName evidence="1">Rhamnulose-1-phosphate aldolase</fullName>
        <ecNumber evidence="1">4.1.2.19</ecNumber>
    </recommendedName>
</protein>
<dbReference type="EC" id="4.1.2.19" evidence="1"/>
<dbReference type="EMBL" id="AP009240">
    <property type="protein sequence ID" value="BAG79714.1"/>
    <property type="molecule type" value="Genomic_DNA"/>
</dbReference>
<dbReference type="RefSeq" id="WP_001179764.1">
    <property type="nucleotide sequence ID" value="NC_011415.1"/>
</dbReference>
<dbReference type="SMR" id="B6I4P4"/>
<dbReference type="GeneID" id="75204576"/>
<dbReference type="KEGG" id="ecy:ECSE_4190"/>
<dbReference type="HOGENOM" id="CLU_076831_0_0_6"/>
<dbReference type="UniPathway" id="UPA00541">
    <property type="reaction ID" value="UER00603"/>
</dbReference>
<dbReference type="Proteomes" id="UP000008199">
    <property type="component" value="Chromosome"/>
</dbReference>
<dbReference type="GO" id="GO:0005829">
    <property type="term" value="C:cytosol"/>
    <property type="evidence" value="ECO:0007669"/>
    <property type="project" value="TreeGrafter"/>
</dbReference>
<dbReference type="GO" id="GO:0046872">
    <property type="term" value="F:metal ion binding"/>
    <property type="evidence" value="ECO:0007669"/>
    <property type="project" value="UniProtKB-KW"/>
</dbReference>
<dbReference type="GO" id="GO:0008994">
    <property type="term" value="F:rhamnulose-1-phosphate aldolase activity"/>
    <property type="evidence" value="ECO:0007669"/>
    <property type="project" value="UniProtKB-UniRule"/>
</dbReference>
<dbReference type="GO" id="GO:0019323">
    <property type="term" value="P:pentose catabolic process"/>
    <property type="evidence" value="ECO:0007669"/>
    <property type="project" value="TreeGrafter"/>
</dbReference>
<dbReference type="GO" id="GO:0019301">
    <property type="term" value="P:rhamnose catabolic process"/>
    <property type="evidence" value="ECO:0007669"/>
    <property type="project" value="UniProtKB-UniRule"/>
</dbReference>
<dbReference type="CDD" id="cd00398">
    <property type="entry name" value="Aldolase_II"/>
    <property type="match status" value="1"/>
</dbReference>
<dbReference type="FunFam" id="3.40.225.10:FF:000006">
    <property type="entry name" value="Rhamnulose-1-phosphate aldolase"/>
    <property type="match status" value="1"/>
</dbReference>
<dbReference type="Gene3D" id="3.40.225.10">
    <property type="entry name" value="Class II aldolase/adducin N-terminal domain"/>
    <property type="match status" value="1"/>
</dbReference>
<dbReference type="HAMAP" id="MF_00770">
    <property type="entry name" value="RhaD"/>
    <property type="match status" value="1"/>
</dbReference>
<dbReference type="InterPro" id="IPR050197">
    <property type="entry name" value="Aldolase_class_II_sugar_metab"/>
</dbReference>
<dbReference type="InterPro" id="IPR001303">
    <property type="entry name" value="Aldolase_II/adducin_N"/>
</dbReference>
<dbReference type="InterPro" id="IPR036409">
    <property type="entry name" value="Aldolase_II/adducin_N_sf"/>
</dbReference>
<dbReference type="InterPro" id="IPR013447">
    <property type="entry name" value="Rhamnulose-1-P_Aldolase"/>
</dbReference>
<dbReference type="NCBIfam" id="NF002963">
    <property type="entry name" value="PRK03634.1"/>
    <property type="match status" value="1"/>
</dbReference>
<dbReference type="NCBIfam" id="TIGR02624">
    <property type="entry name" value="rhamnu_1P_ald"/>
    <property type="match status" value="1"/>
</dbReference>
<dbReference type="PANTHER" id="PTHR22789">
    <property type="entry name" value="FUCULOSE PHOSPHATE ALDOLASE"/>
    <property type="match status" value="1"/>
</dbReference>
<dbReference type="PANTHER" id="PTHR22789:SF16">
    <property type="entry name" value="RHAMNULOSE-1-PHOSPHATE ALDOLASE"/>
    <property type="match status" value="1"/>
</dbReference>
<dbReference type="Pfam" id="PF00596">
    <property type="entry name" value="Aldolase_II"/>
    <property type="match status" value="1"/>
</dbReference>
<dbReference type="SMART" id="SM01007">
    <property type="entry name" value="Aldolase_II"/>
    <property type="match status" value="1"/>
</dbReference>
<dbReference type="SUPFAM" id="SSF53639">
    <property type="entry name" value="AraD/HMP-PK domain-like"/>
    <property type="match status" value="1"/>
</dbReference>
<accession>B6I4P4</accession>
<sequence>MQNITQSWFVQGMIKATTDAWLKGWDERNGGNLTLRLDDADIAPYKDNFHAQPRYIPLSQPMPLLANTPFIVTGSGKFFRNVQLDPAANLGVVKVDSDGAGYHILWGLTNEAVPTSELPAHFLSHCERIKATNGKDRVIMHCHATNLIALTYVLENDTAVFTRQLWEGSTECLVVFPDGVGILPWMVPGTDEIGQATAQEMQKHSLVLWPFHGVFGSGSTLDETFGLIDTAEKSAQVLVKVYSMGGMKQTISREELIALGKRFGVTPLASALAL</sequence>
<feature type="chain" id="PRO_1000193722" description="Rhamnulose-1-phosphate aldolase">
    <location>
        <begin position="1"/>
        <end position="274"/>
    </location>
</feature>
<feature type="active site" evidence="1">
    <location>
        <position position="117"/>
    </location>
</feature>
<feature type="binding site" evidence="1">
    <location>
        <position position="141"/>
    </location>
    <ligand>
        <name>Zn(2+)</name>
        <dbReference type="ChEBI" id="CHEBI:29105"/>
    </ligand>
</feature>
<feature type="binding site" evidence="1">
    <location>
        <position position="143"/>
    </location>
    <ligand>
        <name>Zn(2+)</name>
        <dbReference type="ChEBI" id="CHEBI:29105"/>
    </ligand>
</feature>
<feature type="binding site" evidence="1">
    <location>
        <position position="212"/>
    </location>
    <ligand>
        <name>Zn(2+)</name>
        <dbReference type="ChEBI" id="CHEBI:29105"/>
    </ligand>
</feature>
<proteinExistence type="inferred from homology"/>
<name>RHAD_ECOSE</name>
<keyword id="KW-0963">Cytoplasm</keyword>
<keyword id="KW-0456">Lyase</keyword>
<keyword id="KW-0479">Metal-binding</keyword>
<keyword id="KW-0684">Rhamnose metabolism</keyword>
<keyword id="KW-0862">Zinc</keyword>
<organism>
    <name type="scientific">Escherichia coli (strain SE11)</name>
    <dbReference type="NCBI Taxonomy" id="409438"/>
    <lineage>
        <taxon>Bacteria</taxon>
        <taxon>Pseudomonadati</taxon>
        <taxon>Pseudomonadota</taxon>
        <taxon>Gammaproteobacteria</taxon>
        <taxon>Enterobacterales</taxon>
        <taxon>Enterobacteriaceae</taxon>
        <taxon>Escherichia</taxon>
    </lineage>
</organism>
<gene>
    <name evidence="1" type="primary">rhaD</name>
    <name type="ordered locus">ECSE_4190</name>
</gene>
<evidence type="ECO:0000255" key="1">
    <source>
        <dbReference type="HAMAP-Rule" id="MF_00770"/>
    </source>
</evidence>
<reference key="1">
    <citation type="journal article" date="2008" name="DNA Res.">
        <title>Complete genome sequence and comparative analysis of the wild-type commensal Escherichia coli strain SE11 isolated from a healthy adult.</title>
        <authorList>
            <person name="Oshima K."/>
            <person name="Toh H."/>
            <person name="Ogura Y."/>
            <person name="Sasamoto H."/>
            <person name="Morita H."/>
            <person name="Park S.-H."/>
            <person name="Ooka T."/>
            <person name="Iyoda S."/>
            <person name="Taylor T.D."/>
            <person name="Hayashi T."/>
            <person name="Itoh K."/>
            <person name="Hattori M."/>
        </authorList>
    </citation>
    <scope>NUCLEOTIDE SEQUENCE [LARGE SCALE GENOMIC DNA]</scope>
    <source>
        <strain>SE11</strain>
    </source>
</reference>